<gene>
    <name evidence="1" type="primary">nfuA</name>
    <name type="ordered locus">Spro_4634</name>
</gene>
<sequence>MIRITDTAQEHFAKLLANQEEGTQIRVFVINPGTPTAECGVSYCPPDAVEATDTELKFEKLSAYIDELSKPYLDDAEIDFVTDQLGSQLTLKAPNAKMRKVDDNAPLMERVEYVLQSQINPQLAGHGGRVTLMEITDDSLAILQFGGGCNGCSMVDVTLKEGIEKELLQKFPELKGVRDLTEHQRGEHSYY</sequence>
<name>NFUA_SERP5</name>
<organism>
    <name type="scientific">Serratia proteamaculans (strain 568)</name>
    <dbReference type="NCBI Taxonomy" id="399741"/>
    <lineage>
        <taxon>Bacteria</taxon>
        <taxon>Pseudomonadati</taxon>
        <taxon>Pseudomonadota</taxon>
        <taxon>Gammaproteobacteria</taxon>
        <taxon>Enterobacterales</taxon>
        <taxon>Yersiniaceae</taxon>
        <taxon>Serratia</taxon>
    </lineage>
</organism>
<evidence type="ECO:0000255" key="1">
    <source>
        <dbReference type="HAMAP-Rule" id="MF_01637"/>
    </source>
</evidence>
<proteinExistence type="inferred from homology"/>
<comment type="function">
    <text evidence="1">Involved in iron-sulfur cluster biogenesis. Binds a 4Fe-4S cluster, can transfer this cluster to apoproteins, and thereby intervenes in the maturation of Fe/S proteins. Could also act as a scaffold/chaperone for damaged Fe/S proteins.</text>
</comment>
<comment type="cofactor">
    <cofactor evidence="1">
        <name>[4Fe-4S] cluster</name>
        <dbReference type="ChEBI" id="CHEBI:49883"/>
    </cofactor>
    <text evidence="1">Binds 1 [4Fe-4S] cluster per subunit. The cluster is presumably bound at the interface of two monomers.</text>
</comment>
<comment type="subunit">
    <text evidence="1">Homodimer.</text>
</comment>
<comment type="similarity">
    <text evidence="1">Belongs to the NfuA family.</text>
</comment>
<protein>
    <recommendedName>
        <fullName evidence="1">Fe/S biogenesis protein NfuA</fullName>
    </recommendedName>
</protein>
<dbReference type="EMBL" id="CP000826">
    <property type="protein sequence ID" value="ABV43727.1"/>
    <property type="molecule type" value="Genomic_DNA"/>
</dbReference>
<dbReference type="SMR" id="A8GKT7"/>
<dbReference type="STRING" id="399741.Spro_4634"/>
<dbReference type="KEGG" id="spe:Spro_4634"/>
<dbReference type="eggNOG" id="COG0316">
    <property type="taxonomic scope" value="Bacteria"/>
</dbReference>
<dbReference type="eggNOG" id="COG0694">
    <property type="taxonomic scope" value="Bacteria"/>
</dbReference>
<dbReference type="HOGENOM" id="CLU_094569_0_0_6"/>
<dbReference type="OrthoDB" id="9785450at2"/>
<dbReference type="GO" id="GO:0051539">
    <property type="term" value="F:4 iron, 4 sulfur cluster binding"/>
    <property type="evidence" value="ECO:0007669"/>
    <property type="project" value="UniProtKB-UniRule"/>
</dbReference>
<dbReference type="GO" id="GO:0005506">
    <property type="term" value="F:iron ion binding"/>
    <property type="evidence" value="ECO:0007669"/>
    <property type="project" value="InterPro"/>
</dbReference>
<dbReference type="GO" id="GO:0016226">
    <property type="term" value="P:iron-sulfur cluster assembly"/>
    <property type="evidence" value="ECO:0007669"/>
    <property type="project" value="UniProtKB-UniRule"/>
</dbReference>
<dbReference type="GO" id="GO:0051604">
    <property type="term" value="P:protein maturation"/>
    <property type="evidence" value="ECO:0007669"/>
    <property type="project" value="UniProtKB-UniRule"/>
</dbReference>
<dbReference type="FunFam" id="3.30.300.130:FF:000002">
    <property type="entry name" value="Fe/S biogenesis protein NfuA"/>
    <property type="match status" value="1"/>
</dbReference>
<dbReference type="Gene3D" id="3.30.300.130">
    <property type="entry name" value="Fe-S cluster assembly (FSCA)"/>
    <property type="match status" value="1"/>
</dbReference>
<dbReference type="Gene3D" id="2.60.300.12">
    <property type="entry name" value="HesB-like domain"/>
    <property type="match status" value="1"/>
</dbReference>
<dbReference type="HAMAP" id="MF_01637">
    <property type="entry name" value="Fe_S_biogen_NfuA"/>
    <property type="match status" value="1"/>
</dbReference>
<dbReference type="InterPro" id="IPR017726">
    <property type="entry name" value="Fe/S_biogenesis_protein_NfuA"/>
</dbReference>
<dbReference type="InterPro" id="IPR000361">
    <property type="entry name" value="FeS_biogenesis"/>
</dbReference>
<dbReference type="InterPro" id="IPR034904">
    <property type="entry name" value="FSCA_dom_sf"/>
</dbReference>
<dbReference type="InterPro" id="IPR035903">
    <property type="entry name" value="HesB-like_dom_sf"/>
</dbReference>
<dbReference type="InterPro" id="IPR001075">
    <property type="entry name" value="NIF_FeS_clus_asmbl_NifU_C"/>
</dbReference>
<dbReference type="NCBIfam" id="NF008392">
    <property type="entry name" value="PRK11190.1"/>
    <property type="match status" value="1"/>
</dbReference>
<dbReference type="NCBIfam" id="TIGR03341">
    <property type="entry name" value="YhgI_GntY"/>
    <property type="match status" value="1"/>
</dbReference>
<dbReference type="PANTHER" id="PTHR11178:SF51">
    <property type="entry name" value="FE_S BIOGENESIS PROTEIN NFUA"/>
    <property type="match status" value="1"/>
</dbReference>
<dbReference type="PANTHER" id="PTHR11178">
    <property type="entry name" value="IRON-SULFUR CLUSTER SCAFFOLD PROTEIN NFU-RELATED"/>
    <property type="match status" value="1"/>
</dbReference>
<dbReference type="Pfam" id="PF01521">
    <property type="entry name" value="Fe-S_biosyn"/>
    <property type="match status" value="1"/>
</dbReference>
<dbReference type="Pfam" id="PF01106">
    <property type="entry name" value="NifU"/>
    <property type="match status" value="1"/>
</dbReference>
<dbReference type="SUPFAM" id="SSF117916">
    <property type="entry name" value="Fe-S cluster assembly (FSCA) domain-like"/>
    <property type="match status" value="1"/>
</dbReference>
<dbReference type="SUPFAM" id="SSF89360">
    <property type="entry name" value="HesB-like domain"/>
    <property type="match status" value="1"/>
</dbReference>
<accession>A8GKT7</accession>
<feature type="chain" id="PRO_1000069874" description="Fe/S biogenesis protein NfuA">
    <location>
        <begin position="1"/>
        <end position="191"/>
    </location>
</feature>
<feature type="binding site" evidence="1">
    <location>
        <position position="149"/>
    </location>
    <ligand>
        <name>[4Fe-4S] cluster</name>
        <dbReference type="ChEBI" id="CHEBI:49883"/>
    </ligand>
</feature>
<feature type="binding site" evidence="1">
    <location>
        <position position="152"/>
    </location>
    <ligand>
        <name>[4Fe-4S] cluster</name>
        <dbReference type="ChEBI" id="CHEBI:49883"/>
    </ligand>
</feature>
<reference key="1">
    <citation type="submission" date="2007-09" db="EMBL/GenBank/DDBJ databases">
        <title>Complete sequence of chromosome of Serratia proteamaculans 568.</title>
        <authorList>
            <consortium name="US DOE Joint Genome Institute"/>
            <person name="Copeland A."/>
            <person name="Lucas S."/>
            <person name="Lapidus A."/>
            <person name="Barry K."/>
            <person name="Glavina del Rio T."/>
            <person name="Dalin E."/>
            <person name="Tice H."/>
            <person name="Pitluck S."/>
            <person name="Chain P."/>
            <person name="Malfatti S."/>
            <person name="Shin M."/>
            <person name="Vergez L."/>
            <person name="Schmutz J."/>
            <person name="Larimer F."/>
            <person name="Land M."/>
            <person name="Hauser L."/>
            <person name="Kyrpides N."/>
            <person name="Kim E."/>
            <person name="Taghavi S."/>
            <person name="Newman L."/>
            <person name="Vangronsveld J."/>
            <person name="van der Lelie D."/>
            <person name="Richardson P."/>
        </authorList>
    </citation>
    <scope>NUCLEOTIDE SEQUENCE [LARGE SCALE GENOMIC DNA]</scope>
    <source>
        <strain>568</strain>
    </source>
</reference>
<keyword id="KW-0004">4Fe-4S</keyword>
<keyword id="KW-0408">Iron</keyword>
<keyword id="KW-0411">Iron-sulfur</keyword>
<keyword id="KW-0479">Metal-binding</keyword>